<evidence type="ECO:0000269" key="1">
    <source>
    </source>
</evidence>
<evidence type="ECO:0000303" key="2">
    <source>
    </source>
</evidence>
<sequence>FTAASQTLEAGR</sequence>
<protein>
    <recommendedName>
        <fullName evidence="2">Uncharacterized protein IMPP9</fullName>
    </recommendedName>
</protein>
<proteinExistence type="evidence at protein level"/>
<keyword id="KW-0903">Direct protein sequencing</keyword>
<comment type="tissue specificity">
    <text evidence="1">Nacreous layer of shell.</text>
</comment>
<name>IMP09_NAUMA</name>
<reference key="1">
    <citation type="journal article" date="2009" name="ChemBioChem">
        <title>Evolution of nacre: biochemistry and 'shellomics' of the shell organic matrix of the cephalopod Nautilus macromphalus.</title>
        <authorList>
            <person name="Marie B."/>
            <person name="Marin F."/>
            <person name="Marie A."/>
            <person name="Bedouet L."/>
            <person name="Dubost L."/>
            <person name="Alcaraz G."/>
            <person name="Milet C."/>
            <person name="Luquet G."/>
        </authorList>
    </citation>
    <scope>PROTEIN SEQUENCE</scope>
    <scope>TISSUE SPECIFICITY</scope>
    <source>
        <tissue>Shell</tissue>
    </source>
</reference>
<feature type="chain" id="PRO_0000371470" description="Uncharacterized protein IMPP9">
    <location>
        <begin position="1" status="less than"/>
        <end position="12" status="greater than"/>
    </location>
</feature>
<feature type="unsure residue" description="L or I" evidence="1">
    <location>
        <position position="8"/>
    </location>
</feature>
<feature type="non-terminal residue" evidence="2">
    <location>
        <position position="1"/>
    </location>
</feature>
<feature type="non-terminal residue" evidence="2">
    <location>
        <position position="12"/>
    </location>
</feature>
<accession>P85396</accession>
<organism>
    <name type="scientific">Nautilus macromphalus</name>
    <name type="common">Bellybutton nautilus</name>
    <dbReference type="NCBI Taxonomy" id="34576"/>
    <lineage>
        <taxon>Eukaryota</taxon>
        <taxon>Metazoa</taxon>
        <taxon>Spiralia</taxon>
        <taxon>Lophotrochozoa</taxon>
        <taxon>Mollusca</taxon>
        <taxon>Cephalopoda</taxon>
        <taxon>Nautiloidea</taxon>
        <taxon>Nautilida</taxon>
        <taxon>Nautilidae</taxon>
        <taxon>Nautilus</taxon>
    </lineage>
</organism>